<evidence type="ECO:0000255" key="1">
    <source>
        <dbReference type="PROSITE-ProRule" id="PRU00340"/>
    </source>
</evidence>
<evidence type="ECO:0000269" key="2">
    <source>
    </source>
</evidence>
<evidence type="ECO:0007829" key="3">
    <source>
        <dbReference type="PDB" id="3PQK"/>
    </source>
</evidence>
<accession>Q9PFB1</accession>
<name>BIGR_XYLFA</name>
<reference key="1">
    <citation type="journal article" date="2000" name="Nature">
        <title>The genome sequence of the plant pathogen Xylella fastidiosa.</title>
        <authorList>
            <person name="Simpson A.J.G."/>
            <person name="Reinach F.C."/>
            <person name="Arruda P."/>
            <person name="Abreu F.A."/>
            <person name="Acencio M."/>
            <person name="Alvarenga R."/>
            <person name="Alves L.M.C."/>
            <person name="Araya J.E."/>
            <person name="Baia G.S."/>
            <person name="Baptista C.S."/>
            <person name="Barros M.H."/>
            <person name="Bonaccorsi E.D."/>
            <person name="Bordin S."/>
            <person name="Bove J.M."/>
            <person name="Briones M.R.S."/>
            <person name="Bueno M.R.P."/>
            <person name="Camargo A.A."/>
            <person name="Camargo L.E.A."/>
            <person name="Carraro D.M."/>
            <person name="Carrer H."/>
            <person name="Colauto N.B."/>
            <person name="Colombo C."/>
            <person name="Costa F.F."/>
            <person name="Costa M.C.R."/>
            <person name="Costa-Neto C.M."/>
            <person name="Coutinho L.L."/>
            <person name="Cristofani M."/>
            <person name="Dias-Neto E."/>
            <person name="Docena C."/>
            <person name="El-Dorry H."/>
            <person name="Facincani A.P."/>
            <person name="Ferreira A.J.S."/>
            <person name="Ferreira V.C.A."/>
            <person name="Ferro J.A."/>
            <person name="Fraga J.S."/>
            <person name="Franca S.C."/>
            <person name="Franco M.C."/>
            <person name="Frohme M."/>
            <person name="Furlan L.R."/>
            <person name="Garnier M."/>
            <person name="Goldman G.H."/>
            <person name="Goldman M.H.S."/>
            <person name="Gomes S.L."/>
            <person name="Gruber A."/>
            <person name="Ho P.L."/>
            <person name="Hoheisel J.D."/>
            <person name="Junqueira M.L."/>
            <person name="Kemper E.L."/>
            <person name="Kitajima J.P."/>
            <person name="Krieger J.E."/>
            <person name="Kuramae E.E."/>
            <person name="Laigret F."/>
            <person name="Lambais M.R."/>
            <person name="Leite L.C.C."/>
            <person name="Lemos E.G.M."/>
            <person name="Lemos M.V.F."/>
            <person name="Lopes S.A."/>
            <person name="Lopes C.R."/>
            <person name="Machado J.A."/>
            <person name="Machado M.A."/>
            <person name="Madeira A.M.B.N."/>
            <person name="Madeira H.M.F."/>
            <person name="Marino C.L."/>
            <person name="Marques M.V."/>
            <person name="Martins E.A.L."/>
            <person name="Martins E.M.F."/>
            <person name="Matsukuma A.Y."/>
            <person name="Menck C.F.M."/>
            <person name="Miracca E.C."/>
            <person name="Miyaki C.Y."/>
            <person name="Monteiro-Vitorello C.B."/>
            <person name="Moon D.H."/>
            <person name="Nagai M.A."/>
            <person name="Nascimento A.L.T.O."/>
            <person name="Netto L.E.S."/>
            <person name="Nhani A. Jr."/>
            <person name="Nobrega F.G."/>
            <person name="Nunes L.R."/>
            <person name="Oliveira M.A."/>
            <person name="de Oliveira M.C."/>
            <person name="de Oliveira R.C."/>
            <person name="Palmieri D.A."/>
            <person name="Paris A."/>
            <person name="Peixoto B.R."/>
            <person name="Pereira G.A.G."/>
            <person name="Pereira H.A. Jr."/>
            <person name="Pesquero J.B."/>
            <person name="Quaggio R.B."/>
            <person name="Roberto P.G."/>
            <person name="Rodrigues V."/>
            <person name="de Rosa A.J.M."/>
            <person name="de Rosa V.E. Jr."/>
            <person name="de Sa R.G."/>
            <person name="Santelli R.V."/>
            <person name="Sawasaki H.E."/>
            <person name="da Silva A.C.R."/>
            <person name="da Silva A.M."/>
            <person name="da Silva F.R."/>
            <person name="Silva W.A. Jr."/>
            <person name="da Silveira J.F."/>
            <person name="Silvestri M.L.Z."/>
            <person name="Siqueira W.J."/>
            <person name="de Souza A.A."/>
            <person name="de Souza A.P."/>
            <person name="Terenzi M.F."/>
            <person name="Truffi D."/>
            <person name="Tsai S.M."/>
            <person name="Tsuhako M.H."/>
            <person name="Vallada H."/>
            <person name="Van Sluys M.A."/>
            <person name="Verjovski-Almeida S."/>
            <person name="Vettore A.L."/>
            <person name="Zago M.A."/>
            <person name="Zatz M."/>
            <person name="Meidanis J."/>
            <person name="Setubal J.C."/>
        </authorList>
    </citation>
    <scope>NUCLEOTIDE SEQUENCE [LARGE SCALE GENOMIC DNA]</scope>
    <source>
        <strain>9a5c</strain>
    </source>
</reference>
<reference key="2">
    <citation type="journal article" date="2007" name="J. Bacteriol.">
        <title>BigR, a transcriptional repressor from plant-associated bacteria, regulates an operon implicated in biofilm growth.</title>
        <authorList>
            <person name="Barbosa R.L."/>
            <person name="Benedetti C.E."/>
        </authorList>
    </citation>
    <scope>FUNCTION AS A REPRESSOR</scope>
    <source>
        <strain>9a5c</strain>
    </source>
</reference>
<feature type="chain" id="PRO_0000305336" description="Biofilm growth-associated repressor">
    <location>
        <begin position="1"/>
        <end position="114"/>
    </location>
</feature>
<feature type="domain" description="HTH arsR-type" evidence="1">
    <location>
        <begin position="17"/>
        <end position="111"/>
    </location>
</feature>
<feature type="DNA-binding region" description="H-T-H motif" evidence="1">
    <location>
        <begin position="51"/>
        <end position="74"/>
    </location>
</feature>
<feature type="helix" evidence="3">
    <location>
        <begin position="17"/>
        <end position="32"/>
    </location>
</feature>
<feature type="helix" evidence="3">
    <location>
        <begin position="35"/>
        <end position="45"/>
    </location>
</feature>
<feature type="helix" evidence="3">
    <location>
        <begin position="51"/>
        <end position="58"/>
    </location>
</feature>
<feature type="helix" evidence="3">
    <location>
        <begin position="64"/>
        <end position="74"/>
    </location>
</feature>
<feature type="strand" evidence="3">
    <location>
        <begin position="77"/>
        <end position="81"/>
    </location>
</feature>
<feature type="strand" evidence="3">
    <location>
        <begin position="83"/>
        <end position="85"/>
    </location>
</feature>
<feature type="strand" evidence="3">
    <location>
        <begin position="88"/>
        <end position="91"/>
    </location>
</feature>
<feature type="helix" evidence="3">
    <location>
        <begin position="96"/>
        <end position="106"/>
    </location>
</feature>
<feature type="helix" evidence="3">
    <location>
        <begin position="108"/>
        <end position="111"/>
    </location>
</feature>
<protein>
    <recommendedName>
        <fullName>Biofilm growth-associated repressor</fullName>
    </recommendedName>
</protein>
<comment type="function">
    <text evidence="2">Represses an operon that comprises itself, XF_0764, XF_0765, XF_0766 and blh. Binds to a palindromic AT-rich sequence spanning the -10 region of the blh promoter and blocks transcription of the operon.</text>
</comment>
<dbReference type="EMBL" id="AE003849">
    <property type="protein sequence ID" value="AAF83577.1"/>
    <property type="molecule type" value="Genomic_DNA"/>
</dbReference>
<dbReference type="PIR" id="D82766">
    <property type="entry name" value="D82766"/>
</dbReference>
<dbReference type="RefSeq" id="WP_010893290.1">
    <property type="nucleotide sequence ID" value="NC_002488.3"/>
</dbReference>
<dbReference type="PDB" id="3PQJ">
    <property type="method" value="X-ray"/>
    <property type="resolution" value="2.48 A"/>
    <property type="chains" value="A/B/C/D=13-114"/>
</dbReference>
<dbReference type="PDB" id="3PQK">
    <property type="method" value="X-ray"/>
    <property type="resolution" value="2.09 A"/>
    <property type="chains" value="A/B/C/D/E/F=13-114"/>
</dbReference>
<dbReference type="PDBsum" id="3PQJ"/>
<dbReference type="PDBsum" id="3PQK"/>
<dbReference type="SMR" id="Q9PFB1"/>
<dbReference type="STRING" id="160492.XF_0767"/>
<dbReference type="KEGG" id="xfa:XF_0767"/>
<dbReference type="eggNOG" id="COG0640">
    <property type="taxonomic scope" value="Bacteria"/>
</dbReference>
<dbReference type="HOGENOM" id="CLU_097806_6_4_6"/>
<dbReference type="EvolutionaryTrace" id="Q9PFB1"/>
<dbReference type="Proteomes" id="UP000000812">
    <property type="component" value="Chromosome"/>
</dbReference>
<dbReference type="CollecTF" id="EXPREG_000017b0"/>
<dbReference type="GO" id="GO:0032993">
    <property type="term" value="C:protein-DNA complex"/>
    <property type="evidence" value="ECO:0000353"/>
    <property type="project" value="CollecTF"/>
</dbReference>
<dbReference type="GO" id="GO:0001217">
    <property type="term" value="F:DNA-binding transcription repressor activity"/>
    <property type="evidence" value="ECO:0000353"/>
    <property type="project" value="CollecTF"/>
</dbReference>
<dbReference type="GO" id="GO:0000976">
    <property type="term" value="F:transcription cis-regulatory region binding"/>
    <property type="evidence" value="ECO:0000353"/>
    <property type="project" value="CollecTF"/>
</dbReference>
<dbReference type="GO" id="GO:0045892">
    <property type="term" value="P:negative regulation of DNA-templated transcription"/>
    <property type="evidence" value="ECO:0000270"/>
    <property type="project" value="CollecTF"/>
</dbReference>
<dbReference type="CDD" id="cd00090">
    <property type="entry name" value="HTH_ARSR"/>
    <property type="match status" value="1"/>
</dbReference>
<dbReference type="FunFam" id="1.10.10.10:FF:001091">
    <property type="entry name" value="Biofilm growth-associated repressor"/>
    <property type="match status" value="1"/>
</dbReference>
<dbReference type="Gene3D" id="1.10.10.10">
    <property type="entry name" value="Winged helix-like DNA-binding domain superfamily/Winged helix DNA-binding domain"/>
    <property type="match status" value="1"/>
</dbReference>
<dbReference type="InterPro" id="IPR011991">
    <property type="entry name" value="ArsR-like_HTH"/>
</dbReference>
<dbReference type="InterPro" id="IPR001845">
    <property type="entry name" value="HTH_ArsR_DNA-bd_dom"/>
</dbReference>
<dbReference type="InterPro" id="IPR051011">
    <property type="entry name" value="Metal_resp_trans_reg"/>
</dbReference>
<dbReference type="InterPro" id="IPR036388">
    <property type="entry name" value="WH-like_DNA-bd_sf"/>
</dbReference>
<dbReference type="InterPro" id="IPR036390">
    <property type="entry name" value="WH_DNA-bd_sf"/>
</dbReference>
<dbReference type="NCBIfam" id="NF033788">
    <property type="entry name" value="HTH_metalloreg"/>
    <property type="match status" value="1"/>
</dbReference>
<dbReference type="NCBIfam" id="NF040642">
    <property type="entry name" value="sulf_sens_BigR"/>
    <property type="match status" value="1"/>
</dbReference>
<dbReference type="PANTHER" id="PTHR43132">
    <property type="entry name" value="ARSENICAL RESISTANCE OPERON REPRESSOR ARSR-RELATED"/>
    <property type="match status" value="1"/>
</dbReference>
<dbReference type="PANTHER" id="PTHR43132:SF2">
    <property type="entry name" value="ARSENICAL RESISTANCE OPERON REPRESSOR ARSR-RELATED"/>
    <property type="match status" value="1"/>
</dbReference>
<dbReference type="Pfam" id="PF01022">
    <property type="entry name" value="HTH_5"/>
    <property type="match status" value="1"/>
</dbReference>
<dbReference type="PRINTS" id="PR00778">
    <property type="entry name" value="HTHARSR"/>
</dbReference>
<dbReference type="SMART" id="SM00418">
    <property type="entry name" value="HTH_ARSR"/>
    <property type="match status" value="1"/>
</dbReference>
<dbReference type="SUPFAM" id="SSF46785">
    <property type="entry name" value="Winged helix' DNA-binding domain"/>
    <property type="match status" value="1"/>
</dbReference>
<dbReference type="PROSITE" id="PS50987">
    <property type="entry name" value="HTH_ARSR_2"/>
    <property type="match status" value="1"/>
</dbReference>
<keyword id="KW-0002">3D-structure</keyword>
<keyword id="KW-0238">DNA-binding</keyword>
<keyword id="KW-0678">Repressor</keyword>
<keyword id="KW-0804">Transcription</keyword>
<keyword id="KW-0805">Transcription regulation</keyword>
<proteinExistence type="evidence at protein level"/>
<gene>
    <name type="primary">bigR</name>
    <name type="ordered locus">XF_0767</name>
</gene>
<organism>
    <name type="scientific">Xylella fastidiosa (strain 9a5c)</name>
    <dbReference type="NCBI Taxonomy" id="160492"/>
    <lineage>
        <taxon>Bacteria</taxon>
        <taxon>Pseudomonadati</taxon>
        <taxon>Pseudomonadota</taxon>
        <taxon>Gammaproteobacteria</taxon>
        <taxon>Lysobacterales</taxon>
        <taxon>Lysobacteraceae</taxon>
        <taxon>Xylella</taxon>
    </lineage>
</organism>
<sequence>MVNEMRDDTRPHMTREDMEKRANEVANLLKTLSHPVRLMLVCTLVEGEFSVGELEQQIGIGQPTLSQQLGVLRESGIVETRRNIKQIFYRLTEAKAAQLVNALYTIFCAQEKQA</sequence>